<evidence type="ECO:0000255" key="1">
    <source>
        <dbReference type="HAMAP-Rule" id="MF_00527"/>
    </source>
</evidence>
<proteinExistence type="inferred from homology"/>
<feature type="chain" id="PRO_0000265034" description="Putative 3-methyladenine DNA glycosylase">
    <location>
        <begin position="1"/>
        <end position="181"/>
    </location>
</feature>
<sequence>MSLTAFFSRPSVVVAKDLIGANFFVGSAGGIIVETEAYDREEPASHSFRGPTARNRSMFGPPAHAYVYRSYGIHWCLNFVCLPGSGVLIRALEPTAGIELMQERRRTISLKQLCSGPGRVGEALGIDRSLDGRGLDQPPFRLDLSNAKACAISGTRIGITRAAELEWRFGLEGSIYVSRKF</sequence>
<gene>
    <name type="ordered locus">Meso_1432</name>
</gene>
<comment type="similarity">
    <text evidence="1">Belongs to the DNA glycosylase MPG family.</text>
</comment>
<organism>
    <name type="scientific">Chelativorans sp. (strain BNC1)</name>
    <dbReference type="NCBI Taxonomy" id="266779"/>
    <lineage>
        <taxon>Bacteria</taxon>
        <taxon>Pseudomonadati</taxon>
        <taxon>Pseudomonadota</taxon>
        <taxon>Alphaproteobacteria</taxon>
        <taxon>Hyphomicrobiales</taxon>
        <taxon>Phyllobacteriaceae</taxon>
        <taxon>Chelativorans</taxon>
    </lineage>
</organism>
<reference key="1">
    <citation type="submission" date="2006-06" db="EMBL/GenBank/DDBJ databases">
        <title>Complete sequence of chromosome of Mesorhizobium sp. BNC1.</title>
        <authorList>
            <consortium name="US DOE Joint Genome Institute"/>
            <person name="Copeland A."/>
            <person name="Lucas S."/>
            <person name="Lapidus A."/>
            <person name="Barry K."/>
            <person name="Detter J.C."/>
            <person name="Glavina del Rio T."/>
            <person name="Hammon N."/>
            <person name="Israni S."/>
            <person name="Dalin E."/>
            <person name="Tice H."/>
            <person name="Pitluck S."/>
            <person name="Chertkov O."/>
            <person name="Brettin T."/>
            <person name="Bruce D."/>
            <person name="Han C."/>
            <person name="Tapia R."/>
            <person name="Gilna P."/>
            <person name="Schmutz J."/>
            <person name="Larimer F."/>
            <person name="Land M."/>
            <person name="Hauser L."/>
            <person name="Kyrpides N."/>
            <person name="Mikhailova N."/>
            <person name="Richardson P."/>
        </authorList>
    </citation>
    <scope>NUCLEOTIDE SEQUENCE [LARGE SCALE GENOMIC DNA]</scope>
    <source>
        <strain>BNC1</strain>
    </source>
</reference>
<accession>Q11IE7</accession>
<name>3MGH_CHESB</name>
<protein>
    <recommendedName>
        <fullName evidence="1">Putative 3-methyladenine DNA glycosylase</fullName>
        <ecNumber evidence="1">3.2.2.-</ecNumber>
    </recommendedName>
</protein>
<dbReference type="EC" id="3.2.2.-" evidence="1"/>
<dbReference type="EMBL" id="CP000390">
    <property type="protein sequence ID" value="ABG62828.1"/>
    <property type="molecule type" value="Genomic_DNA"/>
</dbReference>
<dbReference type="SMR" id="Q11IE7"/>
<dbReference type="STRING" id="266779.Meso_1432"/>
<dbReference type="KEGG" id="mes:Meso_1432"/>
<dbReference type="eggNOG" id="COG2094">
    <property type="taxonomic scope" value="Bacteria"/>
</dbReference>
<dbReference type="HOGENOM" id="CLU_060471_3_0_5"/>
<dbReference type="OrthoDB" id="9794313at2"/>
<dbReference type="GO" id="GO:0003905">
    <property type="term" value="F:alkylbase DNA N-glycosylase activity"/>
    <property type="evidence" value="ECO:0007669"/>
    <property type="project" value="InterPro"/>
</dbReference>
<dbReference type="GO" id="GO:0003677">
    <property type="term" value="F:DNA binding"/>
    <property type="evidence" value="ECO:0007669"/>
    <property type="project" value="InterPro"/>
</dbReference>
<dbReference type="GO" id="GO:0006284">
    <property type="term" value="P:base-excision repair"/>
    <property type="evidence" value="ECO:0007669"/>
    <property type="project" value="InterPro"/>
</dbReference>
<dbReference type="CDD" id="cd00540">
    <property type="entry name" value="AAG"/>
    <property type="match status" value="1"/>
</dbReference>
<dbReference type="Gene3D" id="3.10.300.10">
    <property type="entry name" value="Methylpurine-DNA glycosylase (MPG)"/>
    <property type="match status" value="1"/>
</dbReference>
<dbReference type="HAMAP" id="MF_00527">
    <property type="entry name" value="3MGH"/>
    <property type="match status" value="1"/>
</dbReference>
<dbReference type="InterPro" id="IPR011034">
    <property type="entry name" value="Formyl_transferase-like_C_sf"/>
</dbReference>
<dbReference type="InterPro" id="IPR003180">
    <property type="entry name" value="MPG"/>
</dbReference>
<dbReference type="InterPro" id="IPR036995">
    <property type="entry name" value="MPG_sf"/>
</dbReference>
<dbReference type="NCBIfam" id="TIGR00567">
    <property type="entry name" value="3mg"/>
    <property type="match status" value="1"/>
</dbReference>
<dbReference type="NCBIfam" id="NF002003">
    <property type="entry name" value="PRK00802.1-3"/>
    <property type="match status" value="1"/>
</dbReference>
<dbReference type="PANTHER" id="PTHR10429">
    <property type="entry name" value="DNA-3-METHYLADENINE GLYCOSYLASE"/>
    <property type="match status" value="1"/>
</dbReference>
<dbReference type="PANTHER" id="PTHR10429:SF0">
    <property type="entry name" value="DNA-3-METHYLADENINE GLYCOSYLASE"/>
    <property type="match status" value="1"/>
</dbReference>
<dbReference type="Pfam" id="PF02245">
    <property type="entry name" value="Pur_DNA_glyco"/>
    <property type="match status" value="1"/>
</dbReference>
<dbReference type="SUPFAM" id="SSF50486">
    <property type="entry name" value="FMT C-terminal domain-like"/>
    <property type="match status" value="1"/>
</dbReference>
<keyword id="KW-0227">DNA damage</keyword>
<keyword id="KW-0234">DNA repair</keyword>
<keyword id="KW-0378">Hydrolase</keyword>